<reference key="1">
    <citation type="journal article" date="2008" name="BMC Microbiol.">
        <title>Complete genome sequence of Treponema pallidum ssp. pallidum strain SS14 determined with oligonucleotide arrays.</title>
        <authorList>
            <person name="Matejkova P."/>
            <person name="Strouhal M."/>
            <person name="Smajs D."/>
            <person name="Norris S.J."/>
            <person name="Palzkill T."/>
            <person name="Petrosino J.F."/>
            <person name="Sodergren E."/>
            <person name="Norton J.E."/>
            <person name="Singh J."/>
            <person name="Richmond T.A."/>
            <person name="Molla M.N."/>
            <person name="Albert T.J."/>
            <person name="Weinstock G.M."/>
        </authorList>
    </citation>
    <scope>NUCLEOTIDE SEQUENCE [LARGE SCALE GENOMIC DNA]</scope>
    <source>
        <strain>SS14</strain>
    </source>
</reference>
<comment type="function">
    <text evidence="2">With S4 and S5 plays an important role in translational accuracy.</text>
</comment>
<comment type="function">
    <text evidence="2">Interacts with and stabilizes bases of the 16S rRNA that are involved in tRNA selection in the A site and with the mRNA backbone. Located at the interface of the 30S and 50S subunits, it traverses the body of the 30S subunit contacting proteins on the other side and probably holding the rRNA structure together. The combined cluster of proteins S8, S12 and S17 appears to hold together the shoulder and platform of the 30S subunit.</text>
</comment>
<comment type="subunit">
    <text evidence="2">Part of the 30S ribosomal subunit. Contacts proteins S8 and S17. May interact with IF1 in the 30S initiation complex.</text>
</comment>
<comment type="similarity">
    <text evidence="2">Belongs to the universal ribosomal protein uS12 family.</text>
</comment>
<protein>
    <recommendedName>
        <fullName evidence="2">Small ribosomal subunit protein uS12</fullName>
    </recommendedName>
    <alternativeName>
        <fullName evidence="3">30S ribosomal protein S12</fullName>
    </alternativeName>
</protein>
<proteinExistence type="inferred from homology"/>
<evidence type="ECO:0000250" key="1"/>
<evidence type="ECO:0000255" key="2">
    <source>
        <dbReference type="HAMAP-Rule" id="MF_00403"/>
    </source>
</evidence>
<evidence type="ECO:0000305" key="3"/>
<dbReference type="EMBL" id="CP000805">
    <property type="protein sequence ID" value="ACD70669.1"/>
    <property type="molecule type" value="Genomic_DNA"/>
</dbReference>
<dbReference type="RefSeq" id="WP_010881691.1">
    <property type="nucleotide sequence ID" value="NC_021508.1"/>
</dbReference>
<dbReference type="SMR" id="B2S2J0"/>
<dbReference type="GeneID" id="93876035"/>
<dbReference type="KEGG" id="tpp:TPASS_0243"/>
<dbReference type="PATRIC" id="fig|455434.6.peg.248"/>
<dbReference type="Proteomes" id="UP000001202">
    <property type="component" value="Chromosome"/>
</dbReference>
<dbReference type="GO" id="GO:0015935">
    <property type="term" value="C:small ribosomal subunit"/>
    <property type="evidence" value="ECO:0007669"/>
    <property type="project" value="InterPro"/>
</dbReference>
<dbReference type="GO" id="GO:0019843">
    <property type="term" value="F:rRNA binding"/>
    <property type="evidence" value="ECO:0007669"/>
    <property type="project" value="UniProtKB-UniRule"/>
</dbReference>
<dbReference type="GO" id="GO:0003735">
    <property type="term" value="F:structural constituent of ribosome"/>
    <property type="evidence" value="ECO:0007669"/>
    <property type="project" value="InterPro"/>
</dbReference>
<dbReference type="GO" id="GO:0000049">
    <property type="term" value="F:tRNA binding"/>
    <property type="evidence" value="ECO:0007669"/>
    <property type="project" value="UniProtKB-UniRule"/>
</dbReference>
<dbReference type="GO" id="GO:0006412">
    <property type="term" value="P:translation"/>
    <property type="evidence" value="ECO:0007669"/>
    <property type="project" value="UniProtKB-UniRule"/>
</dbReference>
<dbReference type="CDD" id="cd03368">
    <property type="entry name" value="Ribosomal_S12"/>
    <property type="match status" value="1"/>
</dbReference>
<dbReference type="FunFam" id="2.40.50.140:FF:000001">
    <property type="entry name" value="30S ribosomal protein S12"/>
    <property type="match status" value="1"/>
</dbReference>
<dbReference type="Gene3D" id="2.40.50.140">
    <property type="entry name" value="Nucleic acid-binding proteins"/>
    <property type="match status" value="1"/>
</dbReference>
<dbReference type="HAMAP" id="MF_00403_B">
    <property type="entry name" value="Ribosomal_uS12_B"/>
    <property type="match status" value="1"/>
</dbReference>
<dbReference type="InterPro" id="IPR012340">
    <property type="entry name" value="NA-bd_OB-fold"/>
</dbReference>
<dbReference type="InterPro" id="IPR006032">
    <property type="entry name" value="Ribosomal_uS12"/>
</dbReference>
<dbReference type="InterPro" id="IPR005679">
    <property type="entry name" value="Ribosomal_uS12_bac"/>
</dbReference>
<dbReference type="NCBIfam" id="TIGR00981">
    <property type="entry name" value="rpsL_bact"/>
    <property type="match status" value="1"/>
</dbReference>
<dbReference type="PANTHER" id="PTHR11652">
    <property type="entry name" value="30S RIBOSOMAL PROTEIN S12 FAMILY MEMBER"/>
    <property type="match status" value="1"/>
</dbReference>
<dbReference type="Pfam" id="PF00164">
    <property type="entry name" value="Ribosom_S12_S23"/>
    <property type="match status" value="1"/>
</dbReference>
<dbReference type="PIRSF" id="PIRSF002133">
    <property type="entry name" value="Ribosomal_S12/S23"/>
    <property type="match status" value="1"/>
</dbReference>
<dbReference type="PRINTS" id="PR01034">
    <property type="entry name" value="RIBOSOMALS12"/>
</dbReference>
<dbReference type="SUPFAM" id="SSF50249">
    <property type="entry name" value="Nucleic acid-binding proteins"/>
    <property type="match status" value="1"/>
</dbReference>
<dbReference type="PROSITE" id="PS00055">
    <property type="entry name" value="RIBOSOMAL_S12"/>
    <property type="match status" value="1"/>
</dbReference>
<gene>
    <name evidence="2" type="primary">rpsL</name>
    <name type="ordered locus">TPASS_0243</name>
</gene>
<accession>B2S2J0</accession>
<feature type="chain" id="PRO_1000123533" description="Small ribosomal subunit protein uS12">
    <location>
        <begin position="1"/>
        <end position="124"/>
    </location>
</feature>
<feature type="modified residue" description="3-methylthioaspartic acid" evidence="1">
    <location>
        <position position="89"/>
    </location>
</feature>
<keyword id="KW-0488">Methylation</keyword>
<keyword id="KW-0687">Ribonucleoprotein</keyword>
<keyword id="KW-0689">Ribosomal protein</keyword>
<keyword id="KW-0694">RNA-binding</keyword>
<keyword id="KW-0699">rRNA-binding</keyword>
<keyword id="KW-0820">tRNA-binding</keyword>
<organism>
    <name type="scientific">Treponema pallidum subsp. pallidum (strain SS14)</name>
    <dbReference type="NCBI Taxonomy" id="455434"/>
    <lineage>
        <taxon>Bacteria</taxon>
        <taxon>Pseudomonadati</taxon>
        <taxon>Spirochaetota</taxon>
        <taxon>Spirochaetia</taxon>
        <taxon>Spirochaetales</taxon>
        <taxon>Treponemataceae</taxon>
        <taxon>Treponema</taxon>
    </lineage>
</organism>
<name>RS12_TREPS</name>
<sequence length="124" mass="13677">MPTINQLTRIGRKAVFSRTKSPALQACPQKRGVCTRVMTVTPKKPNSALRKVARVRLSSGVEVTAYIPGIGHNLQEHSIVLIRGGRVKDLPGVRYHIIRGAKDTLGVVDRKRGRSKYGAKRPRA</sequence>